<comment type="function">
    <text evidence="1">Produces ATP from ADP in the presence of a proton gradient across the membrane. The alpha chain is a regulatory subunit.</text>
</comment>
<comment type="catalytic activity">
    <reaction evidence="1">
        <text>ATP + H2O + 4 H(+)(in) = ADP + phosphate + 5 H(+)(out)</text>
        <dbReference type="Rhea" id="RHEA:57720"/>
        <dbReference type="ChEBI" id="CHEBI:15377"/>
        <dbReference type="ChEBI" id="CHEBI:15378"/>
        <dbReference type="ChEBI" id="CHEBI:30616"/>
        <dbReference type="ChEBI" id="CHEBI:43474"/>
        <dbReference type="ChEBI" id="CHEBI:456216"/>
        <dbReference type="EC" id="7.1.2.2"/>
    </reaction>
</comment>
<comment type="subunit">
    <text evidence="1">F-type ATPases have 2 components, CF(1) - the catalytic core - and CF(0) - the membrane proton channel. CF(1) has five subunits: alpha(3), beta(3), gamma(1), delta(1), epsilon(1). CF(0) has three main subunits: a(1), b(2) and c(9-12). The alpha and beta chains form an alternating ring which encloses part of the gamma chain. CF(1) is attached to CF(0) by a central stalk formed by the gamma and epsilon chains, while a peripheral stalk is formed by the delta and b chains.</text>
</comment>
<comment type="subcellular location">
    <subcellularLocation>
        <location evidence="1">Cell inner membrane</location>
        <topology evidence="1">Peripheral membrane protein</topology>
    </subcellularLocation>
</comment>
<comment type="similarity">
    <text evidence="1">Belongs to the ATPase alpha/beta chains family.</text>
</comment>
<proteinExistence type="inferred from homology"/>
<name>ATPA_HELP2</name>
<accession>B6JMX4</accession>
<evidence type="ECO:0000255" key="1">
    <source>
        <dbReference type="HAMAP-Rule" id="MF_01346"/>
    </source>
</evidence>
<keyword id="KW-0066">ATP synthesis</keyword>
<keyword id="KW-0067">ATP-binding</keyword>
<keyword id="KW-0997">Cell inner membrane</keyword>
<keyword id="KW-1003">Cell membrane</keyword>
<keyword id="KW-0139">CF(1)</keyword>
<keyword id="KW-0375">Hydrogen ion transport</keyword>
<keyword id="KW-0406">Ion transport</keyword>
<keyword id="KW-0472">Membrane</keyword>
<keyword id="KW-0547">Nucleotide-binding</keyword>
<keyword id="KW-1278">Translocase</keyword>
<keyword id="KW-0813">Transport</keyword>
<feature type="chain" id="PRO_1000143390" description="ATP synthase subunit alpha">
    <location>
        <begin position="1"/>
        <end position="503"/>
    </location>
</feature>
<feature type="binding site" evidence="1">
    <location>
        <begin position="170"/>
        <end position="177"/>
    </location>
    <ligand>
        <name>ATP</name>
        <dbReference type="ChEBI" id="CHEBI:30616"/>
    </ligand>
</feature>
<feature type="site" description="Required for activity" evidence="1">
    <location>
        <position position="363"/>
    </location>
</feature>
<organism>
    <name type="scientific">Helicobacter pylori (strain P12)</name>
    <dbReference type="NCBI Taxonomy" id="570508"/>
    <lineage>
        <taxon>Bacteria</taxon>
        <taxon>Pseudomonadati</taxon>
        <taxon>Campylobacterota</taxon>
        <taxon>Epsilonproteobacteria</taxon>
        <taxon>Campylobacterales</taxon>
        <taxon>Helicobacteraceae</taxon>
        <taxon>Helicobacter</taxon>
    </lineage>
</organism>
<dbReference type="EC" id="7.1.2.2" evidence="1"/>
<dbReference type="EMBL" id="CP001217">
    <property type="protein sequence ID" value="ACJ08252.1"/>
    <property type="molecule type" value="Genomic_DNA"/>
</dbReference>
<dbReference type="SMR" id="B6JMX4"/>
<dbReference type="KEGG" id="hpp:HPP12_1100"/>
<dbReference type="HOGENOM" id="CLU_010091_2_1_7"/>
<dbReference type="Proteomes" id="UP000008198">
    <property type="component" value="Chromosome"/>
</dbReference>
<dbReference type="GO" id="GO:0005886">
    <property type="term" value="C:plasma membrane"/>
    <property type="evidence" value="ECO:0007669"/>
    <property type="project" value="UniProtKB-SubCell"/>
</dbReference>
<dbReference type="GO" id="GO:0045259">
    <property type="term" value="C:proton-transporting ATP synthase complex"/>
    <property type="evidence" value="ECO:0007669"/>
    <property type="project" value="UniProtKB-KW"/>
</dbReference>
<dbReference type="GO" id="GO:0043531">
    <property type="term" value="F:ADP binding"/>
    <property type="evidence" value="ECO:0007669"/>
    <property type="project" value="TreeGrafter"/>
</dbReference>
<dbReference type="GO" id="GO:0005524">
    <property type="term" value="F:ATP binding"/>
    <property type="evidence" value="ECO:0007669"/>
    <property type="project" value="UniProtKB-UniRule"/>
</dbReference>
<dbReference type="GO" id="GO:0046933">
    <property type="term" value="F:proton-transporting ATP synthase activity, rotational mechanism"/>
    <property type="evidence" value="ECO:0007669"/>
    <property type="project" value="UniProtKB-UniRule"/>
</dbReference>
<dbReference type="CDD" id="cd18113">
    <property type="entry name" value="ATP-synt_F1_alpha_C"/>
    <property type="match status" value="1"/>
</dbReference>
<dbReference type="CDD" id="cd18116">
    <property type="entry name" value="ATP-synt_F1_alpha_N"/>
    <property type="match status" value="1"/>
</dbReference>
<dbReference type="CDD" id="cd01132">
    <property type="entry name" value="F1-ATPase_alpha_CD"/>
    <property type="match status" value="1"/>
</dbReference>
<dbReference type="FunFam" id="1.20.150.20:FF:000001">
    <property type="entry name" value="ATP synthase subunit alpha"/>
    <property type="match status" value="1"/>
</dbReference>
<dbReference type="FunFam" id="3.40.50.300:FF:000002">
    <property type="entry name" value="ATP synthase subunit alpha"/>
    <property type="match status" value="1"/>
</dbReference>
<dbReference type="Gene3D" id="2.40.30.20">
    <property type="match status" value="1"/>
</dbReference>
<dbReference type="Gene3D" id="1.20.150.20">
    <property type="entry name" value="ATP synthase alpha/beta chain, C-terminal domain"/>
    <property type="match status" value="1"/>
</dbReference>
<dbReference type="Gene3D" id="3.40.50.300">
    <property type="entry name" value="P-loop containing nucleotide triphosphate hydrolases"/>
    <property type="match status" value="1"/>
</dbReference>
<dbReference type="HAMAP" id="MF_01346">
    <property type="entry name" value="ATP_synth_alpha_bact"/>
    <property type="match status" value="1"/>
</dbReference>
<dbReference type="InterPro" id="IPR023366">
    <property type="entry name" value="ATP_synth_asu-like_sf"/>
</dbReference>
<dbReference type="InterPro" id="IPR000793">
    <property type="entry name" value="ATP_synth_asu_C"/>
</dbReference>
<dbReference type="InterPro" id="IPR038376">
    <property type="entry name" value="ATP_synth_asu_C_sf"/>
</dbReference>
<dbReference type="InterPro" id="IPR033732">
    <property type="entry name" value="ATP_synth_F1_a_nt-bd_dom"/>
</dbReference>
<dbReference type="InterPro" id="IPR005294">
    <property type="entry name" value="ATP_synth_F1_asu"/>
</dbReference>
<dbReference type="InterPro" id="IPR020003">
    <property type="entry name" value="ATPase_a/bsu_AS"/>
</dbReference>
<dbReference type="InterPro" id="IPR004100">
    <property type="entry name" value="ATPase_F1/V1/A1_a/bsu_N"/>
</dbReference>
<dbReference type="InterPro" id="IPR036121">
    <property type="entry name" value="ATPase_F1/V1/A1_a/bsu_N_sf"/>
</dbReference>
<dbReference type="InterPro" id="IPR000194">
    <property type="entry name" value="ATPase_F1/V1/A1_a/bsu_nucl-bd"/>
</dbReference>
<dbReference type="InterPro" id="IPR027417">
    <property type="entry name" value="P-loop_NTPase"/>
</dbReference>
<dbReference type="NCBIfam" id="TIGR00962">
    <property type="entry name" value="atpA"/>
    <property type="match status" value="1"/>
</dbReference>
<dbReference type="NCBIfam" id="NF009884">
    <property type="entry name" value="PRK13343.1"/>
    <property type="match status" value="1"/>
</dbReference>
<dbReference type="PANTHER" id="PTHR48082">
    <property type="entry name" value="ATP SYNTHASE SUBUNIT ALPHA, MITOCHONDRIAL"/>
    <property type="match status" value="1"/>
</dbReference>
<dbReference type="PANTHER" id="PTHR48082:SF2">
    <property type="entry name" value="ATP SYNTHASE SUBUNIT ALPHA, MITOCHONDRIAL"/>
    <property type="match status" value="1"/>
</dbReference>
<dbReference type="Pfam" id="PF00006">
    <property type="entry name" value="ATP-synt_ab"/>
    <property type="match status" value="1"/>
</dbReference>
<dbReference type="Pfam" id="PF00306">
    <property type="entry name" value="ATP-synt_ab_C"/>
    <property type="match status" value="1"/>
</dbReference>
<dbReference type="Pfam" id="PF02874">
    <property type="entry name" value="ATP-synt_ab_N"/>
    <property type="match status" value="1"/>
</dbReference>
<dbReference type="PIRSF" id="PIRSF039088">
    <property type="entry name" value="F_ATPase_subunit_alpha"/>
    <property type="match status" value="1"/>
</dbReference>
<dbReference type="SUPFAM" id="SSF47917">
    <property type="entry name" value="C-terminal domain of alpha and beta subunits of F1 ATP synthase"/>
    <property type="match status" value="1"/>
</dbReference>
<dbReference type="SUPFAM" id="SSF50615">
    <property type="entry name" value="N-terminal domain of alpha and beta subunits of F1 ATP synthase"/>
    <property type="match status" value="1"/>
</dbReference>
<dbReference type="SUPFAM" id="SSF52540">
    <property type="entry name" value="P-loop containing nucleoside triphosphate hydrolases"/>
    <property type="match status" value="1"/>
</dbReference>
<dbReference type="PROSITE" id="PS00152">
    <property type="entry name" value="ATPASE_ALPHA_BETA"/>
    <property type="match status" value="1"/>
</dbReference>
<gene>
    <name evidence="1" type="primary">atpA</name>
    <name type="ordered locus">HPP12_1100</name>
</gene>
<sequence length="503" mass="55143">MSQLKLEEISSVIEEKIKNFELDCDMAEVGKVVSYADGVAKVYGLNGVMSYEVLEFETGDKGVAANLEEDSVGVIVFGFGNNIKEGTSVKRTKSLMKVPVGDAVVGRVLNALGEPIDGKGEIETNEFSLIEQKAPGIMDRKSVHEPLQTGIKAIDALVPIGRGQRELIIGDKQTGKTTVAIDAIINQKGQNVICIYVAIGQKESTVAQVVRKLEEYGAMEYSVVINASASDSAAMQYLAPYSGVAMGEYFRDHARHALIIYDDLSKHAVAYREISLILRRPPGREAFPGDVFYIHSRLLERAAKLCDEKGAGSLTALPIVETQAGDVSAYIPTNIISITDGQIFLETDLFYSGIRPAINVGLSVSRVGGAAQIKATKQVSGTLRLDLAQYRELQAFTQFASDLDEASKKQLERGQRMVEVLKQAPYSPLPIEKQVVIIYAGAKGFLDSVSVKKVVDFEEQLHPFLEAKYPQVLEEIHTKKALDKDLEAMLRKVLEEFKLTYSE</sequence>
<reference key="1">
    <citation type="submission" date="2008-10" db="EMBL/GenBank/DDBJ databases">
        <title>The complete genome sequence of Helicobacter pylori strain P12.</title>
        <authorList>
            <person name="Fischer W."/>
            <person name="Windhager L."/>
            <person name="Karnholz A."/>
            <person name="Zeiller M."/>
            <person name="Zimmer R."/>
            <person name="Haas R."/>
        </authorList>
    </citation>
    <scope>NUCLEOTIDE SEQUENCE [LARGE SCALE GENOMIC DNA]</scope>
    <source>
        <strain>P12</strain>
    </source>
</reference>
<protein>
    <recommendedName>
        <fullName evidence="1">ATP synthase subunit alpha</fullName>
        <ecNumber evidence="1">7.1.2.2</ecNumber>
    </recommendedName>
    <alternativeName>
        <fullName evidence="1">ATP synthase F1 sector subunit alpha</fullName>
    </alternativeName>
    <alternativeName>
        <fullName evidence="1">F-ATPase subunit alpha</fullName>
    </alternativeName>
</protein>